<name>TERD_ALCSP</name>
<evidence type="ECO:0000305" key="1"/>
<keyword id="KW-0614">Plasmid</keyword>
<keyword id="KW-0778">Tellurium resistance</keyword>
<gene>
    <name type="primary">terD</name>
</gene>
<geneLocation type="plasmid">
    <name>IncHI2 pMER610</name>
</geneLocation>
<accession>P18781</accession>
<protein>
    <recommendedName>
        <fullName>Tellurium resistance protein TerD</fullName>
    </recommendedName>
</protein>
<organism>
    <name type="scientific">Alcaligenes sp</name>
    <dbReference type="NCBI Taxonomy" id="512"/>
    <lineage>
        <taxon>Bacteria</taxon>
        <taxon>Pseudomonadati</taxon>
        <taxon>Pseudomonadota</taxon>
        <taxon>Betaproteobacteria</taxon>
        <taxon>Burkholderiales</taxon>
        <taxon>Alcaligenaceae</taxon>
        <taxon>Alcaligenes</taxon>
    </lineage>
</organism>
<sequence>MSVSLSKGGNVSLSKTAPSMKNVLVGLGWDARSTDGQDFDLDASAFLLAANGKVRGDADFIFYNNLKSADGSVTHTGDNRTGEGDGDDESLKIKLDAVPGDVDKIIFVVTIHDAQARRQSFGQVSGAFIRLVNDDNQTEVARYDLTEDASTETAMLFGELYRHNGAWKFRAVGLGYAGGLASVCAQYGINAS</sequence>
<reference key="1">
    <citation type="journal article" date="1988" name="Gene">
        <title>The nucleotide sequence of a plasmid determinant for resistance to tellurium anions.</title>
        <authorList>
            <person name="Jobling M.G."/>
            <person name="Ritchie D.A."/>
        </authorList>
    </citation>
    <scope>NUCLEOTIDE SEQUENCE [GENOMIC DNA]</scope>
</reference>
<feature type="chain" id="PRO_0000170777" description="Tellurium resistance protein TerD">
    <location>
        <begin position="1"/>
        <end position="192"/>
    </location>
</feature>
<proteinExistence type="inferred from homology"/>
<comment type="function">
    <text>Not known; seems to contribute to the tellurium resistance (Ter) mechanism.</text>
</comment>
<comment type="similarity">
    <text evidence="1">Belongs to the CAPAB/TerDEXZ family.</text>
</comment>
<dbReference type="EMBL" id="M20238">
    <property type="protein sequence ID" value="AAA98292.1"/>
    <property type="molecule type" value="Genomic_DNA"/>
</dbReference>
<dbReference type="PIR" id="JT0364">
    <property type="entry name" value="D30754"/>
</dbReference>
<dbReference type="BMRB" id="P18781"/>
<dbReference type="SMR" id="P18781"/>
<dbReference type="GO" id="GO:0046690">
    <property type="term" value="P:response to tellurium ion"/>
    <property type="evidence" value="ECO:0007669"/>
    <property type="project" value="UniProtKB-KW"/>
</dbReference>
<dbReference type="CDD" id="cd06974">
    <property type="entry name" value="TerD_like"/>
    <property type="match status" value="1"/>
</dbReference>
<dbReference type="FunFam" id="2.60.60.30:FF:000001">
    <property type="entry name" value="Tellurium resistance protein TerD"/>
    <property type="match status" value="1"/>
</dbReference>
<dbReference type="Gene3D" id="2.60.60.30">
    <property type="entry name" value="sav2460 like domains"/>
    <property type="match status" value="1"/>
</dbReference>
<dbReference type="InterPro" id="IPR051324">
    <property type="entry name" value="Stress/Tellurium_Resist"/>
</dbReference>
<dbReference type="InterPro" id="IPR003325">
    <property type="entry name" value="TerD"/>
</dbReference>
<dbReference type="PANTHER" id="PTHR32097">
    <property type="entry name" value="CAMP-BINDING PROTEIN 1-RELATED"/>
    <property type="match status" value="1"/>
</dbReference>
<dbReference type="PANTHER" id="PTHR32097:SF4">
    <property type="entry name" value="GENERAL STRESS PROTEIN 16U"/>
    <property type="match status" value="1"/>
</dbReference>
<dbReference type="Pfam" id="PF02342">
    <property type="entry name" value="TerD"/>
    <property type="match status" value="1"/>
</dbReference>